<sequence>MAGFTDLREKLKSMTPHRDKVFEYSNGEKRKYRESDDDESEYEERRDAEARRVKSGIKQASIFTLEECARIEAKIDEVVAKADKGLYREHTVDRAPLRNKYFFGEGYTYGAQLEKRGPGQERLYSKGEVDDIPDWVHELVIDRLVTHGVIPEGFVNSAVINDYQPGGCIVSHVDPIHIFERPIVSVSFFSDSALCFGCKFLFKPIRVSEPVLHLPVRRGSVTVLSGYAADDITHCIRPQDIKERRAVIILRKTRADAPRLDSNSLSPSIVSPKRRHILKAKRSHRKADPDAAHRPRVLEMDKELQRRSLSSRQRRHDDGSSENSWRRADDREPAARYTHDHAPTRRVKMRRH</sequence>
<evidence type="ECO:0000250" key="1">
    <source>
        <dbReference type="UniProtKB" id="Q6P6C2"/>
    </source>
</evidence>
<evidence type="ECO:0000256" key="2">
    <source>
        <dbReference type="SAM" id="MobiDB-lite"/>
    </source>
</evidence>
<evidence type="ECO:0000269" key="3">
    <source>
    </source>
</evidence>
<evidence type="ECO:0000303" key="4">
    <source>
    </source>
</evidence>
<evidence type="ECO:0000305" key="5"/>
<evidence type="ECO:0000305" key="6">
    <source>
    </source>
</evidence>
<evidence type="ECO:0007744" key="7">
    <source>
        <dbReference type="PDB" id="4NPL"/>
    </source>
</evidence>
<evidence type="ECO:0007829" key="8">
    <source>
        <dbReference type="PDB" id="4NPL"/>
    </source>
</evidence>
<feature type="chain" id="PRO_0000421248" description="RNA demethylase ALKBH5">
    <location>
        <begin position="1"/>
        <end position="352"/>
    </location>
</feature>
<feature type="region of interest" description="Disordered" evidence="2">
    <location>
        <begin position="18"/>
        <end position="47"/>
    </location>
</feature>
<feature type="region of interest" description="Disordered" evidence="2">
    <location>
        <begin position="260"/>
        <end position="352"/>
    </location>
</feature>
<feature type="compositionally biased region" description="Basic and acidic residues" evidence="2">
    <location>
        <begin position="18"/>
        <end position="34"/>
    </location>
</feature>
<feature type="compositionally biased region" description="Basic residues" evidence="2">
    <location>
        <begin position="272"/>
        <end position="285"/>
    </location>
</feature>
<feature type="compositionally biased region" description="Basic and acidic residues" evidence="2">
    <location>
        <begin position="286"/>
        <end position="306"/>
    </location>
</feature>
<feature type="compositionally biased region" description="Basic and acidic residues" evidence="2">
    <location>
        <begin position="315"/>
        <end position="343"/>
    </location>
</feature>
<feature type="active site" evidence="1">
    <location>
        <position position="107"/>
    </location>
</feature>
<feature type="binding site" evidence="3 7">
    <location>
        <position position="161"/>
    </location>
    <ligand>
        <name>2-oxoglutarate</name>
        <dbReference type="ChEBI" id="CHEBI:16810"/>
    </ligand>
</feature>
<feature type="binding site" evidence="3 7">
    <location>
        <position position="163"/>
    </location>
    <ligand>
        <name>2-oxoglutarate</name>
        <dbReference type="ChEBI" id="CHEBI:16810"/>
    </ligand>
</feature>
<feature type="binding site" evidence="3 7">
    <location>
        <position position="172"/>
    </location>
    <ligand>
        <name>2-oxoglutarate</name>
        <dbReference type="ChEBI" id="CHEBI:16810"/>
    </ligand>
</feature>
<feature type="binding site" evidence="6">
    <location>
        <position position="172"/>
    </location>
    <ligand>
        <name>Fe cation</name>
        <dbReference type="ChEBI" id="CHEBI:24875"/>
        <note>catalytic</note>
    </ligand>
</feature>
<feature type="binding site" evidence="6">
    <location>
        <position position="174"/>
    </location>
    <ligand>
        <name>Fe cation</name>
        <dbReference type="ChEBI" id="CHEBI:24875"/>
        <note>catalytic</note>
    </ligand>
</feature>
<feature type="binding site" evidence="3 7">
    <location>
        <position position="234"/>
    </location>
    <ligand>
        <name>2-oxoglutarate</name>
        <dbReference type="ChEBI" id="CHEBI:16810"/>
    </ligand>
</feature>
<feature type="binding site" evidence="6">
    <location>
        <position position="234"/>
    </location>
    <ligand>
        <name>Fe cation</name>
        <dbReference type="ChEBI" id="CHEBI:24875"/>
        <note>catalytic</note>
    </ligand>
</feature>
<feature type="binding site" evidence="3 7">
    <location>
        <position position="245"/>
    </location>
    <ligand>
        <name>2-oxoglutarate</name>
        <dbReference type="ChEBI" id="CHEBI:16810"/>
    </ligand>
</feature>
<feature type="disulfide bond" evidence="1">
    <location>
        <begin position="198"/>
        <end position="235"/>
    </location>
</feature>
<feature type="helix" evidence="8">
    <location>
        <begin position="42"/>
        <end position="55"/>
    </location>
</feature>
<feature type="strand" evidence="8">
    <location>
        <begin position="57"/>
        <end position="60"/>
    </location>
</feature>
<feature type="helix" evidence="8">
    <location>
        <begin position="65"/>
        <end position="83"/>
    </location>
</feature>
<feature type="helix" evidence="8">
    <location>
        <begin position="89"/>
        <end position="91"/>
    </location>
</feature>
<feature type="strand" evidence="8">
    <location>
        <begin position="92"/>
        <end position="95"/>
    </location>
</feature>
<feature type="strand" evidence="8">
    <location>
        <begin position="98"/>
        <end position="104"/>
    </location>
</feature>
<feature type="strand" evidence="8">
    <location>
        <begin position="128"/>
        <end position="130"/>
    </location>
</feature>
<feature type="helix" evidence="8">
    <location>
        <begin position="134"/>
        <end position="139"/>
    </location>
</feature>
<feature type="helix" evidence="8">
    <location>
        <begin position="141"/>
        <end position="146"/>
    </location>
</feature>
<feature type="strand" evidence="8">
    <location>
        <begin position="157"/>
        <end position="163"/>
    </location>
</feature>
<feature type="strand" evidence="8">
    <location>
        <begin position="169"/>
        <end position="172"/>
    </location>
</feature>
<feature type="turn" evidence="8">
    <location>
        <begin position="176"/>
        <end position="178"/>
    </location>
</feature>
<feature type="strand" evidence="8">
    <location>
        <begin position="183"/>
        <end position="190"/>
    </location>
</feature>
<feature type="strand" evidence="8">
    <location>
        <begin position="192"/>
        <end position="197"/>
    </location>
</feature>
<feature type="turn" evidence="8">
    <location>
        <begin position="202"/>
        <end position="205"/>
    </location>
</feature>
<feature type="strand" evidence="8">
    <location>
        <begin position="211"/>
        <end position="216"/>
    </location>
</feature>
<feature type="strand" evidence="8">
    <location>
        <begin position="221"/>
        <end position="224"/>
    </location>
</feature>
<feature type="helix" evidence="8">
    <location>
        <begin position="226"/>
        <end position="230"/>
    </location>
</feature>
<feature type="strand" evidence="8">
    <location>
        <begin position="234"/>
        <end position="236"/>
    </location>
</feature>
<feature type="helix" evidence="8">
    <location>
        <begin position="238"/>
        <end position="240"/>
    </location>
</feature>
<feature type="strand" evidence="8">
    <location>
        <begin position="245"/>
        <end position="251"/>
    </location>
</feature>
<keyword id="KW-0002">3D-structure</keyword>
<keyword id="KW-0223">Dioxygenase</keyword>
<keyword id="KW-1015">Disulfide bond</keyword>
<keyword id="KW-0408">Iron</keyword>
<keyword id="KW-0479">Metal-binding</keyword>
<keyword id="KW-0539">Nucleus</keyword>
<keyword id="KW-0560">Oxidoreductase</keyword>
<keyword id="KW-1185">Reference proteome</keyword>
<name>ALKB5_DANRE</name>
<dbReference type="EC" id="1.14.11.53" evidence="1"/>
<dbReference type="EMBL" id="AL928835">
    <property type="status" value="NOT_ANNOTATED_CDS"/>
    <property type="molecule type" value="Genomic_DNA"/>
</dbReference>
<dbReference type="EMBL" id="BC124804">
    <property type="protein sequence ID" value="AAI24805.1"/>
    <property type="molecule type" value="mRNA"/>
</dbReference>
<dbReference type="RefSeq" id="NP_001070855.1">
    <property type="nucleotide sequence ID" value="NM_001077387.1"/>
</dbReference>
<dbReference type="PDB" id="4NPL">
    <property type="method" value="X-ray"/>
    <property type="resolution" value="1.65 A"/>
    <property type="chains" value="A/B=38-287"/>
</dbReference>
<dbReference type="PDB" id="4NPM">
    <property type="method" value="X-ray"/>
    <property type="resolution" value="1.80 A"/>
    <property type="chains" value="A/B=38-287"/>
</dbReference>
<dbReference type="PDBsum" id="4NPL"/>
<dbReference type="PDBsum" id="4NPM"/>
<dbReference type="SMR" id="Q08BA6"/>
<dbReference type="FunCoup" id="Q08BA6">
    <property type="interactions" value="847"/>
</dbReference>
<dbReference type="MINT" id="Q08BA6"/>
<dbReference type="STRING" id="7955.ENSDARP00000086116"/>
<dbReference type="PaxDb" id="7955-ENSDARP00000086116"/>
<dbReference type="Ensembl" id="ENSDART00000091683">
    <property type="protein sequence ID" value="ENSDARP00000086116"/>
    <property type="gene ID" value="ENSDARG00000063003"/>
</dbReference>
<dbReference type="GeneID" id="570158"/>
<dbReference type="KEGG" id="dre:570158"/>
<dbReference type="AGR" id="ZFIN:ZDB-GENE-061013-602"/>
<dbReference type="CTD" id="54890"/>
<dbReference type="ZFIN" id="ZDB-GENE-061013-602">
    <property type="gene designation" value="alkbh5"/>
</dbReference>
<dbReference type="eggNOG" id="KOG4176">
    <property type="taxonomic scope" value="Eukaryota"/>
</dbReference>
<dbReference type="HOGENOM" id="CLU_047472_1_0_1"/>
<dbReference type="InParanoid" id="Q08BA6"/>
<dbReference type="OMA" id="GWVHELV"/>
<dbReference type="OrthoDB" id="271595at2759"/>
<dbReference type="PhylomeDB" id="Q08BA6"/>
<dbReference type="TreeFam" id="TF329212"/>
<dbReference type="BRENDA" id="1.14.11.53">
    <property type="organism ID" value="928"/>
</dbReference>
<dbReference type="Reactome" id="R-DRE-73943">
    <property type="pathway name" value="Reversal of alkylation damage by DNA dioxygenases"/>
</dbReference>
<dbReference type="EvolutionaryTrace" id="Q08BA6"/>
<dbReference type="PRO" id="PR:Q08BA6"/>
<dbReference type="Proteomes" id="UP000000437">
    <property type="component" value="Chromosome 1"/>
</dbReference>
<dbReference type="Bgee" id="ENSDARG00000063003">
    <property type="expression patterns" value="Expressed in testis and 25 other cell types or tissues"/>
</dbReference>
<dbReference type="GO" id="GO:0016607">
    <property type="term" value="C:nuclear speck"/>
    <property type="evidence" value="ECO:0000250"/>
    <property type="project" value="UniProtKB"/>
</dbReference>
<dbReference type="GO" id="GO:0005634">
    <property type="term" value="C:nucleus"/>
    <property type="evidence" value="ECO:0000250"/>
    <property type="project" value="UniProtKB"/>
</dbReference>
<dbReference type="GO" id="GO:0042382">
    <property type="term" value="C:paraspeckles"/>
    <property type="evidence" value="ECO:0000250"/>
    <property type="project" value="UniProtKB"/>
</dbReference>
<dbReference type="GO" id="GO:0016706">
    <property type="term" value="F:2-oxoglutarate-dependent dioxygenase activity"/>
    <property type="evidence" value="ECO:0000250"/>
    <property type="project" value="UniProtKB"/>
</dbReference>
<dbReference type="GO" id="GO:0046872">
    <property type="term" value="F:metal ion binding"/>
    <property type="evidence" value="ECO:0007669"/>
    <property type="project" value="UniProtKB-KW"/>
</dbReference>
<dbReference type="GO" id="GO:0140693">
    <property type="term" value="F:molecular condensate scaffold activity"/>
    <property type="evidence" value="ECO:0000250"/>
    <property type="project" value="UniProtKB"/>
</dbReference>
<dbReference type="GO" id="GO:1990931">
    <property type="term" value="F:mRNA N6-methyladenosine dioxygenase activity"/>
    <property type="evidence" value="ECO:0000250"/>
    <property type="project" value="UniProtKB"/>
</dbReference>
<dbReference type="GO" id="GO:0035515">
    <property type="term" value="F:oxidative RNA demethylase activity"/>
    <property type="evidence" value="ECO:0000314"/>
    <property type="project" value="ZFIN"/>
</dbReference>
<dbReference type="GO" id="GO:0140694">
    <property type="term" value="P:membraneless organelle assembly"/>
    <property type="evidence" value="ECO:0000250"/>
    <property type="project" value="UniProtKB"/>
</dbReference>
<dbReference type="GO" id="GO:0061157">
    <property type="term" value="P:mRNA destabilization"/>
    <property type="evidence" value="ECO:0000250"/>
    <property type="project" value="UniProtKB"/>
</dbReference>
<dbReference type="GO" id="GO:0006397">
    <property type="term" value="P:mRNA processing"/>
    <property type="evidence" value="ECO:0007669"/>
    <property type="project" value="InterPro"/>
</dbReference>
<dbReference type="GO" id="GO:0010793">
    <property type="term" value="P:regulation of mRNA export from nucleus"/>
    <property type="evidence" value="ECO:0000250"/>
    <property type="project" value="UniProtKB"/>
</dbReference>
<dbReference type="GO" id="GO:0050684">
    <property type="term" value="P:regulation of mRNA processing"/>
    <property type="evidence" value="ECO:0000250"/>
    <property type="project" value="UniProtKB"/>
</dbReference>
<dbReference type="GO" id="GO:0006417">
    <property type="term" value="P:regulation of translation"/>
    <property type="evidence" value="ECO:0000250"/>
    <property type="project" value="UniProtKB"/>
</dbReference>
<dbReference type="GO" id="GO:0001666">
    <property type="term" value="P:response to hypoxia"/>
    <property type="evidence" value="ECO:0000250"/>
    <property type="project" value="UniProtKB"/>
</dbReference>
<dbReference type="GO" id="GO:0007283">
    <property type="term" value="P:spermatogenesis"/>
    <property type="evidence" value="ECO:0000250"/>
    <property type="project" value="UniProtKB"/>
</dbReference>
<dbReference type="FunFam" id="2.60.120.590:FF:000002">
    <property type="entry name" value="RNA demethylase ALKBH5"/>
    <property type="match status" value="1"/>
</dbReference>
<dbReference type="Gene3D" id="2.60.120.590">
    <property type="entry name" value="Alpha-ketoglutarate-dependent dioxygenase AlkB-like"/>
    <property type="match status" value="1"/>
</dbReference>
<dbReference type="InterPro" id="IPR027450">
    <property type="entry name" value="AlkB-like"/>
</dbReference>
<dbReference type="InterPro" id="IPR037151">
    <property type="entry name" value="AlkB-like_sf"/>
</dbReference>
<dbReference type="InterPro" id="IPR032860">
    <property type="entry name" value="ALKBH5"/>
</dbReference>
<dbReference type="PANTHER" id="PTHR32074">
    <property type="entry name" value="RNA DEMETHYLASE ALKBH5"/>
    <property type="match status" value="1"/>
</dbReference>
<dbReference type="PANTHER" id="PTHR32074:SF2">
    <property type="entry name" value="RNA DEMETHYLASE ALKBH5"/>
    <property type="match status" value="1"/>
</dbReference>
<dbReference type="Pfam" id="PF13532">
    <property type="entry name" value="2OG-FeII_Oxy_2"/>
    <property type="match status" value="1"/>
</dbReference>
<dbReference type="SUPFAM" id="SSF51197">
    <property type="entry name" value="Clavaminate synthase-like"/>
    <property type="match status" value="1"/>
</dbReference>
<comment type="function">
    <text evidence="1 3">Dioxygenase that specifically demethylates N(6)-methyladenosine (m6A) RNA, the most prevalent internal modification of messenger RNA (mRNA) in higher eukaryotes (PubMed:24561204). Demethylates RNA by oxidative demethylation, which requires molecular oxygen, alpha-ketoglutarate and iron (By similarity). Demethylation of m6A mRNA affects mRNA processing, translation and export (By similarity).</text>
</comment>
<comment type="catalytic activity">
    <reaction evidence="1">
        <text>an N(6)-methyladenosine in mRNA + 2-oxoglutarate + O2 = an adenosine in mRNA + formaldehyde + succinate + CO2</text>
        <dbReference type="Rhea" id="RHEA:49520"/>
        <dbReference type="Rhea" id="RHEA-COMP:12414"/>
        <dbReference type="Rhea" id="RHEA-COMP:12417"/>
        <dbReference type="ChEBI" id="CHEBI:15379"/>
        <dbReference type="ChEBI" id="CHEBI:16526"/>
        <dbReference type="ChEBI" id="CHEBI:16810"/>
        <dbReference type="ChEBI" id="CHEBI:16842"/>
        <dbReference type="ChEBI" id="CHEBI:30031"/>
        <dbReference type="ChEBI" id="CHEBI:74411"/>
        <dbReference type="ChEBI" id="CHEBI:74449"/>
        <dbReference type="EC" id="1.14.11.53"/>
    </reaction>
    <physiologicalReaction direction="left-to-right" evidence="1">
        <dbReference type="Rhea" id="RHEA:49521"/>
    </physiologicalReaction>
</comment>
<comment type="cofactor">
    <cofactor evidence="3">
        <name>Fe(2+)</name>
        <dbReference type="ChEBI" id="CHEBI:29033"/>
    </cofactor>
    <text evidence="6">Binds 1 Fe(2+) ion per subunit.</text>
</comment>
<comment type="subunit">
    <text evidence="3">Monomer.</text>
</comment>
<comment type="subcellular location">
    <subcellularLocation>
        <location evidence="1">Nucleus speckle</location>
    </subcellularLocation>
</comment>
<comment type="domain">
    <text evidence="1">The C-terminal disordered region undergoes liquid-liquid phase separation (LLPS) for the formation of paraspeckle membraneless compartment.</text>
</comment>
<comment type="similarity">
    <text evidence="5">Belongs to the alkB family.</text>
</comment>
<gene>
    <name type="primary">alkbh5</name>
</gene>
<organism>
    <name type="scientific">Danio rerio</name>
    <name type="common">Zebrafish</name>
    <name type="synonym">Brachydanio rerio</name>
    <dbReference type="NCBI Taxonomy" id="7955"/>
    <lineage>
        <taxon>Eukaryota</taxon>
        <taxon>Metazoa</taxon>
        <taxon>Chordata</taxon>
        <taxon>Craniata</taxon>
        <taxon>Vertebrata</taxon>
        <taxon>Euteleostomi</taxon>
        <taxon>Actinopterygii</taxon>
        <taxon>Neopterygii</taxon>
        <taxon>Teleostei</taxon>
        <taxon>Ostariophysi</taxon>
        <taxon>Cypriniformes</taxon>
        <taxon>Danionidae</taxon>
        <taxon>Danioninae</taxon>
        <taxon>Danio</taxon>
    </lineage>
</organism>
<reference key="1">
    <citation type="journal article" date="2013" name="Nature">
        <title>The zebrafish reference genome sequence and its relationship to the human genome.</title>
        <authorList>
            <person name="Howe K."/>
            <person name="Clark M.D."/>
            <person name="Torroja C.F."/>
            <person name="Torrance J."/>
            <person name="Berthelot C."/>
            <person name="Muffato M."/>
            <person name="Collins J.E."/>
            <person name="Humphray S."/>
            <person name="McLaren K."/>
            <person name="Matthews L."/>
            <person name="McLaren S."/>
            <person name="Sealy I."/>
            <person name="Caccamo M."/>
            <person name="Churcher C."/>
            <person name="Scott C."/>
            <person name="Barrett J.C."/>
            <person name="Koch R."/>
            <person name="Rauch G.J."/>
            <person name="White S."/>
            <person name="Chow W."/>
            <person name="Kilian B."/>
            <person name="Quintais L.T."/>
            <person name="Guerra-Assuncao J.A."/>
            <person name="Zhou Y."/>
            <person name="Gu Y."/>
            <person name="Yen J."/>
            <person name="Vogel J.H."/>
            <person name="Eyre T."/>
            <person name="Redmond S."/>
            <person name="Banerjee R."/>
            <person name="Chi J."/>
            <person name="Fu B."/>
            <person name="Langley E."/>
            <person name="Maguire S.F."/>
            <person name="Laird G.K."/>
            <person name="Lloyd D."/>
            <person name="Kenyon E."/>
            <person name="Donaldson S."/>
            <person name="Sehra H."/>
            <person name="Almeida-King J."/>
            <person name="Loveland J."/>
            <person name="Trevanion S."/>
            <person name="Jones M."/>
            <person name="Quail M."/>
            <person name="Willey D."/>
            <person name="Hunt A."/>
            <person name="Burton J."/>
            <person name="Sims S."/>
            <person name="McLay K."/>
            <person name="Plumb B."/>
            <person name="Davis J."/>
            <person name="Clee C."/>
            <person name="Oliver K."/>
            <person name="Clark R."/>
            <person name="Riddle C."/>
            <person name="Elliot D."/>
            <person name="Threadgold G."/>
            <person name="Harden G."/>
            <person name="Ware D."/>
            <person name="Begum S."/>
            <person name="Mortimore B."/>
            <person name="Kerry G."/>
            <person name="Heath P."/>
            <person name="Phillimore B."/>
            <person name="Tracey A."/>
            <person name="Corby N."/>
            <person name="Dunn M."/>
            <person name="Johnson C."/>
            <person name="Wood J."/>
            <person name="Clark S."/>
            <person name="Pelan S."/>
            <person name="Griffiths G."/>
            <person name="Smith M."/>
            <person name="Glithero R."/>
            <person name="Howden P."/>
            <person name="Barker N."/>
            <person name="Lloyd C."/>
            <person name="Stevens C."/>
            <person name="Harley J."/>
            <person name="Holt K."/>
            <person name="Panagiotidis G."/>
            <person name="Lovell J."/>
            <person name="Beasley H."/>
            <person name="Henderson C."/>
            <person name="Gordon D."/>
            <person name="Auger K."/>
            <person name="Wright D."/>
            <person name="Collins J."/>
            <person name="Raisen C."/>
            <person name="Dyer L."/>
            <person name="Leung K."/>
            <person name="Robertson L."/>
            <person name="Ambridge K."/>
            <person name="Leongamornlert D."/>
            <person name="McGuire S."/>
            <person name="Gilderthorp R."/>
            <person name="Griffiths C."/>
            <person name="Manthravadi D."/>
            <person name="Nichol S."/>
            <person name="Barker G."/>
            <person name="Whitehead S."/>
            <person name="Kay M."/>
            <person name="Brown J."/>
            <person name="Murnane C."/>
            <person name="Gray E."/>
            <person name="Humphries M."/>
            <person name="Sycamore N."/>
            <person name="Barker D."/>
            <person name="Saunders D."/>
            <person name="Wallis J."/>
            <person name="Babbage A."/>
            <person name="Hammond S."/>
            <person name="Mashreghi-Mohammadi M."/>
            <person name="Barr L."/>
            <person name="Martin S."/>
            <person name="Wray P."/>
            <person name="Ellington A."/>
            <person name="Matthews N."/>
            <person name="Ellwood M."/>
            <person name="Woodmansey R."/>
            <person name="Clark G."/>
            <person name="Cooper J."/>
            <person name="Tromans A."/>
            <person name="Grafham D."/>
            <person name="Skuce C."/>
            <person name="Pandian R."/>
            <person name="Andrews R."/>
            <person name="Harrison E."/>
            <person name="Kimberley A."/>
            <person name="Garnett J."/>
            <person name="Fosker N."/>
            <person name="Hall R."/>
            <person name="Garner P."/>
            <person name="Kelly D."/>
            <person name="Bird C."/>
            <person name="Palmer S."/>
            <person name="Gehring I."/>
            <person name="Berger A."/>
            <person name="Dooley C.M."/>
            <person name="Ersan-Urun Z."/>
            <person name="Eser C."/>
            <person name="Geiger H."/>
            <person name="Geisler M."/>
            <person name="Karotki L."/>
            <person name="Kirn A."/>
            <person name="Konantz J."/>
            <person name="Konantz M."/>
            <person name="Oberlander M."/>
            <person name="Rudolph-Geiger S."/>
            <person name="Teucke M."/>
            <person name="Lanz C."/>
            <person name="Raddatz G."/>
            <person name="Osoegawa K."/>
            <person name="Zhu B."/>
            <person name="Rapp A."/>
            <person name="Widaa S."/>
            <person name="Langford C."/>
            <person name="Yang F."/>
            <person name="Schuster S.C."/>
            <person name="Carter N.P."/>
            <person name="Harrow J."/>
            <person name="Ning Z."/>
            <person name="Herrero J."/>
            <person name="Searle S.M."/>
            <person name="Enright A."/>
            <person name="Geisler R."/>
            <person name="Plasterk R.H."/>
            <person name="Lee C."/>
            <person name="Westerfield M."/>
            <person name="de Jong P.J."/>
            <person name="Zon L.I."/>
            <person name="Postlethwait J.H."/>
            <person name="Nusslein-Volhard C."/>
            <person name="Hubbard T.J."/>
            <person name="Roest Crollius H."/>
            <person name="Rogers J."/>
            <person name="Stemple D.L."/>
        </authorList>
    </citation>
    <scope>NUCLEOTIDE SEQUENCE [LARGE SCALE GENOMIC DNA]</scope>
    <source>
        <strain>Tuebingen</strain>
    </source>
</reference>
<reference key="2">
    <citation type="submission" date="2006-10" db="EMBL/GenBank/DDBJ databases">
        <authorList>
            <consortium name="NIH - Zebrafish Gene Collection (ZGC) project"/>
        </authorList>
    </citation>
    <scope>NUCLEOTIDE SEQUENCE [LARGE SCALE MRNA]</scope>
    <source>
        <tissue>Ovary</tissue>
    </source>
</reference>
<reference key="3">
    <citation type="journal article" date="2014" name="FEBS Lett.">
        <title>Crystal structure of the RNA demethylase ALKBH5 from zebrafish.</title>
        <authorList>
            <person name="Chen W."/>
            <person name="Zhang L."/>
            <person name="Zheng G."/>
            <person name="Fu Y."/>
            <person name="Ji Q."/>
            <person name="Liu F."/>
            <person name="Chen H."/>
            <person name="He C."/>
        </authorList>
    </citation>
    <scope>X-RAY CRYSTALLOGRAPHY (1.65 ANGSTROMS) OF 38-287 IN COMPLEX WITH ALPHA-KETOGLUTARATE; MANGANESE AND SUCCINATE</scope>
    <scope>FUNCTION</scope>
    <scope>COFACTOR</scope>
</reference>
<accession>Q08BA6</accession>
<proteinExistence type="evidence at protein level"/>
<protein>
    <recommendedName>
        <fullName evidence="4">RNA demethylase ALKBH5</fullName>
        <ecNumber evidence="1">1.14.11.53</ecNumber>
    </recommendedName>
    <alternativeName>
        <fullName>Alkylated DNA repair protein alkB homolog 5</fullName>
    </alternativeName>
    <alternativeName>
        <fullName>Alpha-ketoglutarate-dependent dioxygenase alkB homolog 5</fullName>
    </alternativeName>
</protein>